<sequence>MSHSVKIYDTCIGCTQCVRACPTDVLEMIPWDGCKAKQIASAPRTEDCVGCKRCESACPTDFLSVRVYLGPETTRSMALSY</sequence>
<organism>
    <name type="scientific">Saccharum hybrid</name>
    <name type="common">Sugarcane</name>
    <dbReference type="NCBI Taxonomy" id="15819"/>
    <lineage>
        <taxon>Eukaryota</taxon>
        <taxon>Viridiplantae</taxon>
        <taxon>Streptophyta</taxon>
        <taxon>Embryophyta</taxon>
        <taxon>Tracheophyta</taxon>
        <taxon>Spermatophyta</taxon>
        <taxon>Magnoliopsida</taxon>
        <taxon>Liliopsida</taxon>
        <taxon>Poales</taxon>
        <taxon>Poaceae</taxon>
        <taxon>PACMAD clade</taxon>
        <taxon>Panicoideae</taxon>
        <taxon>Andropogonodae</taxon>
        <taxon>Andropogoneae</taxon>
        <taxon>Saccharinae</taxon>
        <taxon>Saccharum</taxon>
    </lineage>
</organism>
<proteinExistence type="inferred from homology"/>
<gene>
    <name evidence="2" type="primary">psaC</name>
    <name type="ordered locus">PS043</name>
</gene>
<geneLocation type="chloroplast"/>
<keyword id="KW-0004">4Fe-4S</keyword>
<keyword id="KW-0150">Chloroplast</keyword>
<keyword id="KW-0249">Electron transport</keyword>
<keyword id="KW-0408">Iron</keyword>
<keyword id="KW-0411">Iron-sulfur</keyword>
<keyword id="KW-0472">Membrane</keyword>
<keyword id="KW-0479">Metal-binding</keyword>
<keyword id="KW-0560">Oxidoreductase</keyword>
<keyword id="KW-0602">Photosynthesis</keyword>
<keyword id="KW-0603">Photosystem I</keyword>
<keyword id="KW-0934">Plastid</keyword>
<keyword id="KW-0677">Repeat</keyword>
<keyword id="KW-0793">Thylakoid</keyword>
<keyword id="KW-0813">Transport</keyword>
<name>PSAC_SACHY</name>
<feature type="initiator methionine" description="Removed" evidence="1">
    <location>
        <position position="1"/>
    </location>
</feature>
<feature type="chain" id="PRO_0000062002" description="Photosystem I iron-sulfur center">
    <location>
        <begin position="2"/>
        <end position="81"/>
    </location>
</feature>
<feature type="domain" description="4Fe-4S ferredoxin-type 1" evidence="2">
    <location>
        <begin position="2"/>
        <end position="31"/>
    </location>
</feature>
<feature type="domain" description="4Fe-4S ferredoxin-type 2" evidence="2">
    <location>
        <begin position="39"/>
        <end position="68"/>
    </location>
</feature>
<feature type="binding site" evidence="2">
    <location>
        <position position="11"/>
    </location>
    <ligand>
        <name>[4Fe-4S] cluster</name>
        <dbReference type="ChEBI" id="CHEBI:49883"/>
        <label>1</label>
    </ligand>
</feature>
<feature type="binding site" evidence="2">
    <location>
        <position position="14"/>
    </location>
    <ligand>
        <name>[4Fe-4S] cluster</name>
        <dbReference type="ChEBI" id="CHEBI:49883"/>
        <label>1</label>
    </ligand>
</feature>
<feature type="binding site" evidence="2">
    <location>
        <position position="17"/>
    </location>
    <ligand>
        <name>[4Fe-4S] cluster</name>
        <dbReference type="ChEBI" id="CHEBI:49883"/>
        <label>1</label>
    </ligand>
</feature>
<feature type="binding site" evidence="2">
    <location>
        <position position="21"/>
    </location>
    <ligand>
        <name>[4Fe-4S] cluster</name>
        <dbReference type="ChEBI" id="CHEBI:49883"/>
        <label>2</label>
    </ligand>
</feature>
<feature type="binding site" evidence="2">
    <location>
        <position position="48"/>
    </location>
    <ligand>
        <name>[4Fe-4S] cluster</name>
        <dbReference type="ChEBI" id="CHEBI:49883"/>
        <label>2</label>
    </ligand>
</feature>
<feature type="binding site" evidence="2">
    <location>
        <position position="51"/>
    </location>
    <ligand>
        <name>[4Fe-4S] cluster</name>
        <dbReference type="ChEBI" id="CHEBI:49883"/>
        <label>2</label>
    </ligand>
</feature>
<feature type="binding site" evidence="2">
    <location>
        <position position="54"/>
    </location>
    <ligand>
        <name>[4Fe-4S] cluster</name>
        <dbReference type="ChEBI" id="CHEBI:49883"/>
        <label>2</label>
    </ligand>
</feature>
<feature type="binding site" evidence="2">
    <location>
        <position position="58"/>
    </location>
    <ligand>
        <name>[4Fe-4S] cluster</name>
        <dbReference type="ChEBI" id="CHEBI:49883"/>
        <label>1</label>
    </ligand>
</feature>
<comment type="function">
    <text evidence="2">Apoprotein for the two 4Fe-4S centers FA and FB of photosystem I (PSI); essential for photochemical activity. FB is the terminal electron acceptor of PSI, donating electrons to ferredoxin. The C-terminus interacts with PsaA/B/D and helps assemble the protein into the PSI complex. Required for binding of PsaD and PsaE to PSI. PSI is a plastocyanin-ferredoxin oxidoreductase, converting photonic excitation into a charge separation, which transfers an electron from the donor P700 chlorophyll pair to the spectroscopically characterized acceptors A0, A1, FX, FA and FB in turn.</text>
</comment>
<comment type="catalytic activity">
    <reaction evidence="2">
        <text>reduced [plastocyanin] + hnu + oxidized [2Fe-2S]-[ferredoxin] = oxidized [plastocyanin] + reduced [2Fe-2S]-[ferredoxin]</text>
        <dbReference type="Rhea" id="RHEA:30407"/>
        <dbReference type="Rhea" id="RHEA-COMP:10000"/>
        <dbReference type="Rhea" id="RHEA-COMP:10001"/>
        <dbReference type="Rhea" id="RHEA-COMP:10039"/>
        <dbReference type="Rhea" id="RHEA-COMP:10040"/>
        <dbReference type="ChEBI" id="CHEBI:29036"/>
        <dbReference type="ChEBI" id="CHEBI:30212"/>
        <dbReference type="ChEBI" id="CHEBI:33737"/>
        <dbReference type="ChEBI" id="CHEBI:33738"/>
        <dbReference type="ChEBI" id="CHEBI:49552"/>
        <dbReference type="EC" id="1.97.1.12"/>
    </reaction>
</comment>
<comment type="cofactor">
    <cofactor evidence="2">
        <name>[4Fe-4S] cluster</name>
        <dbReference type="ChEBI" id="CHEBI:49883"/>
    </cofactor>
    <text evidence="2">Binds 2 [4Fe-4S] clusters. Cluster 2 is most probably the spectroscopically characterized electron acceptor FA and cluster 1 is most probably FB.</text>
</comment>
<comment type="subunit">
    <text evidence="2">The eukaryotic PSI reaction center is composed of at least 11 subunits.</text>
</comment>
<comment type="subcellular location">
    <subcellularLocation>
        <location evidence="2">Plastid</location>
        <location evidence="2">Chloroplast thylakoid membrane</location>
        <topology evidence="2">Peripheral membrane protein</topology>
        <orientation evidence="2">Stromal side</orientation>
    </subcellularLocation>
</comment>
<protein>
    <recommendedName>
        <fullName evidence="2">Photosystem I iron-sulfur center</fullName>
        <ecNumber evidence="2">1.97.1.12</ecNumber>
    </recommendedName>
    <alternativeName>
        <fullName evidence="2">9 kDa polypeptide</fullName>
    </alternativeName>
    <alternativeName>
        <fullName evidence="2">PSI-C</fullName>
    </alternativeName>
    <alternativeName>
        <fullName evidence="2">Photosystem I subunit VII</fullName>
    </alternativeName>
    <alternativeName>
        <fullName evidence="2">PsaC</fullName>
    </alternativeName>
</protein>
<evidence type="ECO:0000250" key="1"/>
<evidence type="ECO:0000255" key="2">
    <source>
        <dbReference type="HAMAP-Rule" id="MF_01303"/>
    </source>
</evidence>
<reference key="1">
    <citation type="journal article" date="2004" name="Curr. Genet.">
        <title>Structural features and transcript-editing analysis of sugarcane (Saccharum officinarum L.) chloroplast genome.</title>
        <authorList>
            <person name="Calsa T. Jr."/>
            <person name="Carraro D.M."/>
            <person name="Benatti M.R."/>
            <person name="Barbosa A.C."/>
            <person name="Kitajima J.P."/>
            <person name="Carrer H."/>
        </authorList>
    </citation>
    <scope>NUCLEOTIDE SEQUENCE [LARGE SCALE GENOMIC DNA]</scope>
    <source>
        <strain>cv. SP-80-3280</strain>
    </source>
</reference>
<dbReference type="EC" id="1.97.1.12" evidence="2"/>
<dbReference type="EMBL" id="AE009947">
    <property type="protein sequence ID" value="AAT44654.1"/>
    <property type="molecule type" value="Genomic_DNA"/>
</dbReference>
<dbReference type="SMR" id="Q6L3D9"/>
<dbReference type="GO" id="GO:0009535">
    <property type="term" value="C:chloroplast thylakoid membrane"/>
    <property type="evidence" value="ECO:0007669"/>
    <property type="project" value="UniProtKB-SubCell"/>
</dbReference>
<dbReference type="GO" id="GO:0009522">
    <property type="term" value="C:photosystem I"/>
    <property type="evidence" value="ECO:0007669"/>
    <property type="project" value="UniProtKB-KW"/>
</dbReference>
<dbReference type="GO" id="GO:0051539">
    <property type="term" value="F:4 iron, 4 sulfur cluster binding"/>
    <property type="evidence" value="ECO:0007669"/>
    <property type="project" value="UniProtKB-KW"/>
</dbReference>
<dbReference type="GO" id="GO:0009055">
    <property type="term" value="F:electron transfer activity"/>
    <property type="evidence" value="ECO:0007669"/>
    <property type="project" value="UniProtKB-UniRule"/>
</dbReference>
<dbReference type="GO" id="GO:0046872">
    <property type="term" value="F:metal ion binding"/>
    <property type="evidence" value="ECO:0007669"/>
    <property type="project" value="UniProtKB-KW"/>
</dbReference>
<dbReference type="GO" id="GO:0016491">
    <property type="term" value="F:oxidoreductase activity"/>
    <property type="evidence" value="ECO:0007669"/>
    <property type="project" value="UniProtKB-KW"/>
</dbReference>
<dbReference type="GO" id="GO:0009773">
    <property type="term" value="P:photosynthetic electron transport in photosystem I"/>
    <property type="evidence" value="ECO:0007669"/>
    <property type="project" value="InterPro"/>
</dbReference>
<dbReference type="FunFam" id="3.30.70.20:FF:000001">
    <property type="entry name" value="Photosystem I iron-sulfur center"/>
    <property type="match status" value="1"/>
</dbReference>
<dbReference type="Gene3D" id="3.30.70.20">
    <property type="match status" value="1"/>
</dbReference>
<dbReference type="HAMAP" id="MF_01303">
    <property type="entry name" value="PSI_PsaC"/>
    <property type="match status" value="1"/>
</dbReference>
<dbReference type="InterPro" id="IPR017896">
    <property type="entry name" value="4Fe4S_Fe-S-bd"/>
</dbReference>
<dbReference type="InterPro" id="IPR017900">
    <property type="entry name" value="4Fe4S_Fe_S_CS"/>
</dbReference>
<dbReference type="InterPro" id="IPR050157">
    <property type="entry name" value="PSI_iron-sulfur_center"/>
</dbReference>
<dbReference type="InterPro" id="IPR017491">
    <property type="entry name" value="PSI_PsaC"/>
</dbReference>
<dbReference type="NCBIfam" id="TIGR03048">
    <property type="entry name" value="PS_I_psaC"/>
    <property type="match status" value="1"/>
</dbReference>
<dbReference type="PANTHER" id="PTHR24960:SF79">
    <property type="entry name" value="PHOTOSYSTEM I IRON-SULFUR CENTER"/>
    <property type="match status" value="1"/>
</dbReference>
<dbReference type="PANTHER" id="PTHR24960">
    <property type="entry name" value="PHOTOSYSTEM I IRON-SULFUR CENTER-RELATED"/>
    <property type="match status" value="1"/>
</dbReference>
<dbReference type="Pfam" id="PF12838">
    <property type="entry name" value="Fer4_7"/>
    <property type="match status" value="1"/>
</dbReference>
<dbReference type="SUPFAM" id="SSF54862">
    <property type="entry name" value="4Fe-4S ferredoxins"/>
    <property type="match status" value="1"/>
</dbReference>
<dbReference type="PROSITE" id="PS00198">
    <property type="entry name" value="4FE4S_FER_1"/>
    <property type="match status" value="2"/>
</dbReference>
<dbReference type="PROSITE" id="PS51379">
    <property type="entry name" value="4FE4S_FER_2"/>
    <property type="match status" value="2"/>
</dbReference>
<accession>Q6L3D9</accession>